<gene>
    <name type="primary">htpX</name>
    <name type="ordered locus">b1829</name>
    <name type="ordered locus">JW1818</name>
</gene>
<feature type="chain" id="PRO_0000138860" description="Protease HtpX">
    <location>
        <begin position="1"/>
        <end position="293"/>
    </location>
</feature>
<feature type="topological domain" description="Cytoplasmic" evidence="2">
    <location>
        <begin position="1"/>
        <end position="3"/>
    </location>
</feature>
<feature type="transmembrane region" description="Helical" evidence="2">
    <location>
        <begin position="4"/>
        <end position="24"/>
    </location>
</feature>
<feature type="topological domain" description="Periplasmic">
    <location>
        <begin position="25"/>
        <end position="33"/>
    </location>
</feature>
<feature type="transmembrane region" description="Helical" evidence="2">
    <location>
        <begin position="34"/>
        <end position="54"/>
    </location>
</feature>
<feature type="topological domain" description="Cytoplasmic">
    <location>
        <begin position="55"/>
        <end position="293"/>
    </location>
</feature>
<feature type="active site" evidence="1">
    <location>
        <position position="140"/>
    </location>
</feature>
<feature type="binding site" evidence="1">
    <location>
        <position position="139"/>
    </location>
    <ligand>
        <name>Zn(2+)</name>
        <dbReference type="ChEBI" id="CHEBI:29105"/>
        <note>catalytic</note>
    </ligand>
</feature>
<feature type="binding site" evidence="1">
    <location>
        <position position="143"/>
    </location>
    <ligand>
        <name>Zn(2+)</name>
        <dbReference type="ChEBI" id="CHEBI:29105"/>
        <note>catalytic</note>
    </ligand>
</feature>
<feature type="binding site" evidence="1">
    <location>
        <position position="222"/>
    </location>
    <ligand>
        <name>Zn(2+)</name>
        <dbReference type="ChEBI" id="CHEBI:29105"/>
        <note>catalytic</note>
    </ligand>
</feature>
<feature type="mutagenesis site" description="Does not complement a double ftsH/htpX disruption mutant." evidence="3">
    <original>N</original>
    <variation>D</variation>
    <location>
        <position position="105"/>
    </location>
</feature>
<feature type="mutagenesis site" description="Does not complement a double ftsH/htpX disruption mutant." evidence="3">
    <original>F</original>
    <variation>A</variation>
    <location>
        <position position="107"/>
    </location>
</feature>
<feature type="mutagenesis site" description="Does not complement a double ftsH/htpX disruption mutant. No self-degradation." evidence="3">
    <original>H</original>
    <variation>F</variation>
    <location>
        <position position="139"/>
    </location>
</feature>
<feature type="mutagenesis site" description="Does not complement a double ftsH/htpX disruption mutant." evidence="3">
    <original>E</original>
    <variation>Q</variation>
    <location>
        <position position="140"/>
    </location>
</feature>
<feature type="mutagenesis site" description="Does not complement a double ftsH/htpX disruption mutant." evidence="3">
    <original>E</original>
    <variation>Q</variation>
    <location>
        <position position="222"/>
    </location>
</feature>
<feature type="mutagenesis site" description="Does not complement a double ftsH/htpX disruption mutant." evidence="3">
    <original>D</original>
    <variation>N</variation>
    <location>
        <position position="226"/>
    </location>
</feature>
<feature type="mutagenesis site" description="Does not complement a double ftsH/htpX disruption mutant." evidence="3">
    <original>H</original>
    <variation>F</variation>
    <location>
        <position position="276"/>
    </location>
</feature>
<accession>P23894</accession>
<proteinExistence type="evidence at protein level"/>
<keyword id="KW-0068">Autocatalytic cleavage</keyword>
<keyword id="KW-0997">Cell inner membrane</keyword>
<keyword id="KW-1003">Cell membrane</keyword>
<keyword id="KW-0378">Hydrolase</keyword>
<keyword id="KW-0472">Membrane</keyword>
<keyword id="KW-0479">Metal-binding</keyword>
<keyword id="KW-0482">Metalloprotease</keyword>
<keyword id="KW-0645">Protease</keyword>
<keyword id="KW-1185">Reference proteome</keyword>
<keyword id="KW-0346">Stress response</keyword>
<keyword id="KW-0812">Transmembrane</keyword>
<keyword id="KW-1133">Transmembrane helix</keyword>
<keyword id="KW-0862">Zinc</keyword>
<organism>
    <name type="scientific">Escherichia coli (strain K12)</name>
    <dbReference type="NCBI Taxonomy" id="83333"/>
    <lineage>
        <taxon>Bacteria</taxon>
        <taxon>Pseudomonadati</taxon>
        <taxon>Pseudomonadota</taxon>
        <taxon>Gammaproteobacteria</taxon>
        <taxon>Enterobacterales</taxon>
        <taxon>Enterobacteriaceae</taxon>
        <taxon>Escherichia</taxon>
    </lineage>
</organism>
<dbReference type="EC" id="3.4.24.-"/>
<dbReference type="EMBL" id="M58470">
    <property type="protein sequence ID" value="AAA62779.1"/>
    <property type="molecule type" value="Genomic_DNA"/>
</dbReference>
<dbReference type="EMBL" id="U00096">
    <property type="protein sequence ID" value="AAC74899.1"/>
    <property type="molecule type" value="Genomic_DNA"/>
</dbReference>
<dbReference type="EMBL" id="AP009048">
    <property type="protein sequence ID" value="BAA15637.1"/>
    <property type="molecule type" value="Genomic_DNA"/>
</dbReference>
<dbReference type="PIR" id="A43659">
    <property type="entry name" value="A43659"/>
</dbReference>
<dbReference type="RefSeq" id="NP_416343.1">
    <property type="nucleotide sequence ID" value="NC_000913.3"/>
</dbReference>
<dbReference type="RefSeq" id="WP_000984520.1">
    <property type="nucleotide sequence ID" value="NZ_SSZK01000001.1"/>
</dbReference>
<dbReference type="SMR" id="P23894"/>
<dbReference type="BioGRID" id="4260355">
    <property type="interactions" value="36"/>
</dbReference>
<dbReference type="FunCoup" id="P23894">
    <property type="interactions" value="418"/>
</dbReference>
<dbReference type="STRING" id="511145.b1829"/>
<dbReference type="MEROPS" id="M48.002"/>
<dbReference type="TCDB" id="9.B.1.1.6">
    <property type="family name" value="the integral membrane caax protease (caax protease) family"/>
</dbReference>
<dbReference type="jPOST" id="P23894"/>
<dbReference type="PaxDb" id="511145-b1829"/>
<dbReference type="EnsemblBacteria" id="AAC74899">
    <property type="protein sequence ID" value="AAC74899"/>
    <property type="gene ID" value="b1829"/>
</dbReference>
<dbReference type="GeneID" id="946076"/>
<dbReference type="KEGG" id="ecj:JW1818"/>
<dbReference type="KEGG" id="eco:b1829"/>
<dbReference type="KEGG" id="ecoc:C3026_10425"/>
<dbReference type="PATRIC" id="fig|1411691.4.peg.421"/>
<dbReference type="EchoBASE" id="EB0457"/>
<dbReference type="eggNOG" id="COG0501">
    <property type="taxonomic scope" value="Bacteria"/>
</dbReference>
<dbReference type="HOGENOM" id="CLU_042266_1_0_6"/>
<dbReference type="InParanoid" id="P23894"/>
<dbReference type="OMA" id="AVCCTEG"/>
<dbReference type="OrthoDB" id="15218at2"/>
<dbReference type="PhylomeDB" id="P23894"/>
<dbReference type="BioCyc" id="EcoCyc:EG10462-MONOMER"/>
<dbReference type="PRO" id="PR:P23894"/>
<dbReference type="Proteomes" id="UP000000625">
    <property type="component" value="Chromosome"/>
</dbReference>
<dbReference type="GO" id="GO:0016020">
    <property type="term" value="C:membrane"/>
    <property type="evidence" value="ECO:0000314"/>
    <property type="project" value="EcoCyc"/>
</dbReference>
<dbReference type="GO" id="GO:0005886">
    <property type="term" value="C:plasma membrane"/>
    <property type="evidence" value="ECO:0000314"/>
    <property type="project" value="EcoCyc"/>
</dbReference>
<dbReference type="GO" id="GO:0004222">
    <property type="term" value="F:metalloendopeptidase activity"/>
    <property type="evidence" value="ECO:0000314"/>
    <property type="project" value="EcoCyc"/>
</dbReference>
<dbReference type="GO" id="GO:0008270">
    <property type="term" value="F:zinc ion binding"/>
    <property type="evidence" value="ECO:0000314"/>
    <property type="project" value="EcoCyc"/>
</dbReference>
<dbReference type="GO" id="GO:0006508">
    <property type="term" value="P:proteolysis"/>
    <property type="evidence" value="ECO:0000314"/>
    <property type="project" value="EcoCyc"/>
</dbReference>
<dbReference type="GO" id="GO:0009266">
    <property type="term" value="P:response to temperature stimulus"/>
    <property type="evidence" value="ECO:0000270"/>
    <property type="project" value="EcoCyc"/>
</dbReference>
<dbReference type="CDD" id="cd07335">
    <property type="entry name" value="M48B_HtpX_like"/>
    <property type="match status" value="1"/>
</dbReference>
<dbReference type="FunFam" id="3.30.2010.10:FF:000001">
    <property type="entry name" value="Protease HtpX"/>
    <property type="match status" value="1"/>
</dbReference>
<dbReference type="Gene3D" id="3.30.2010.10">
    <property type="entry name" value="Metalloproteases ('zincins'), catalytic domain"/>
    <property type="match status" value="1"/>
</dbReference>
<dbReference type="HAMAP" id="MF_00188">
    <property type="entry name" value="Pept_M48_protease_HtpX"/>
    <property type="match status" value="1"/>
</dbReference>
<dbReference type="InterPro" id="IPR050083">
    <property type="entry name" value="HtpX_protease"/>
</dbReference>
<dbReference type="InterPro" id="IPR022919">
    <property type="entry name" value="Pept_M48_protease_HtpX"/>
</dbReference>
<dbReference type="InterPro" id="IPR001915">
    <property type="entry name" value="Peptidase_M48"/>
</dbReference>
<dbReference type="NCBIfam" id="NF003965">
    <property type="entry name" value="PRK05457.1"/>
    <property type="match status" value="1"/>
</dbReference>
<dbReference type="PANTHER" id="PTHR43221">
    <property type="entry name" value="PROTEASE HTPX"/>
    <property type="match status" value="1"/>
</dbReference>
<dbReference type="PANTHER" id="PTHR43221:SF1">
    <property type="entry name" value="PROTEASE HTPX"/>
    <property type="match status" value="1"/>
</dbReference>
<dbReference type="Pfam" id="PF01435">
    <property type="entry name" value="Peptidase_M48"/>
    <property type="match status" value="1"/>
</dbReference>
<protein>
    <recommendedName>
        <fullName>Protease HtpX</fullName>
        <ecNumber>3.4.24.-</ecNumber>
    </recommendedName>
    <alternativeName>
        <fullName>Heat shock protein HtpX</fullName>
    </alternativeName>
</protein>
<evidence type="ECO:0000250" key="1"/>
<evidence type="ECO:0000255" key="2"/>
<evidence type="ECO:0000269" key="3">
    <source>
    </source>
</evidence>
<evidence type="ECO:0000269" key="4">
    <source>
    </source>
</evidence>
<evidence type="ECO:0000269" key="5">
    <source>
    </source>
</evidence>
<evidence type="ECO:0000305" key="6"/>
<evidence type="ECO:0000305" key="7">
    <source>
    </source>
</evidence>
<reference key="1">
    <citation type="journal article" date="1991" name="J. Bacteriol.">
        <title>Isolation, characterization, and sequence of an Escherichia coli heat shock gene, htpX.</title>
        <authorList>
            <person name="Kornitzer D."/>
            <person name="Teff D."/>
            <person name="Altuvia S."/>
            <person name="Oppenheim A.B."/>
        </authorList>
    </citation>
    <scope>NUCLEOTIDE SEQUENCE [GENOMIC DNA]</scope>
    <scope>INDUCTION BY HEAT SHOCK</scope>
    <scope>DISRUPTION PHENOTYPE</scope>
    <source>
        <strain>K12 / W3350 / ATCC 27020</strain>
    </source>
</reference>
<reference key="2">
    <citation type="journal article" date="1996" name="DNA Res.">
        <title>A 460-kb DNA sequence of the Escherichia coli K-12 genome corresponding to the 40.1-50.0 min region on the linkage map.</title>
        <authorList>
            <person name="Itoh T."/>
            <person name="Aiba H."/>
            <person name="Baba T."/>
            <person name="Fujita K."/>
            <person name="Hayashi K."/>
            <person name="Inada T."/>
            <person name="Isono K."/>
            <person name="Kasai H."/>
            <person name="Kimura S."/>
            <person name="Kitakawa M."/>
            <person name="Kitagawa M."/>
            <person name="Makino K."/>
            <person name="Miki T."/>
            <person name="Mizobuchi K."/>
            <person name="Mori H."/>
            <person name="Mori T."/>
            <person name="Motomura K."/>
            <person name="Nakade S."/>
            <person name="Nakamura Y."/>
            <person name="Nashimoto H."/>
            <person name="Nishio Y."/>
            <person name="Oshima T."/>
            <person name="Saito N."/>
            <person name="Sampei G."/>
            <person name="Seki Y."/>
            <person name="Sivasundaram S."/>
            <person name="Tagami H."/>
            <person name="Takeda J."/>
            <person name="Takemoto K."/>
            <person name="Wada C."/>
            <person name="Yamamoto Y."/>
            <person name="Horiuchi T."/>
        </authorList>
    </citation>
    <scope>NUCLEOTIDE SEQUENCE [LARGE SCALE GENOMIC DNA]</scope>
    <source>
        <strain>K12 / W3110 / ATCC 27325 / DSM 5911</strain>
    </source>
</reference>
<reference key="3">
    <citation type="journal article" date="1997" name="Science">
        <title>The complete genome sequence of Escherichia coli K-12.</title>
        <authorList>
            <person name="Blattner F.R."/>
            <person name="Plunkett G. III"/>
            <person name="Bloch C.A."/>
            <person name="Perna N.T."/>
            <person name="Burland V."/>
            <person name="Riley M."/>
            <person name="Collado-Vides J."/>
            <person name="Glasner J.D."/>
            <person name="Rode C.K."/>
            <person name="Mayhew G.F."/>
            <person name="Gregor J."/>
            <person name="Davis N.W."/>
            <person name="Kirkpatrick H.A."/>
            <person name="Goeden M.A."/>
            <person name="Rose D.J."/>
            <person name="Mau B."/>
            <person name="Shao Y."/>
        </authorList>
    </citation>
    <scope>NUCLEOTIDE SEQUENCE [LARGE SCALE GENOMIC DNA]</scope>
    <source>
        <strain>K12 / MG1655 / ATCC 47076</strain>
    </source>
</reference>
<reference key="4">
    <citation type="journal article" date="2006" name="Mol. Syst. Biol.">
        <title>Highly accurate genome sequences of Escherichia coli K-12 strains MG1655 and W3110.</title>
        <authorList>
            <person name="Hayashi K."/>
            <person name="Morooka N."/>
            <person name="Yamamoto Y."/>
            <person name="Fujita K."/>
            <person name="Isono K."/>
            <person name="Choi S."/>
            <person name="Ohtsubo E."/>
            <person name="Baba T."/>
            <person name="Wanner B.L."/>
            <person name="Mori H."/>
            <person name="Horiuchi T."/>
        </authorList>
    </citation>
    <scope>NUCLEOTIDE SEQUENCE [LARGE SCALE GENOMIC DNA]</scope>
    <source>
        <strain>K12 / W3110 / ATCC 27325 / DSM 5911</strain>
    </source>
</reference>
<reference key="5">
    <citation type="journal article" date="1995" name="Proc. Natl. Acad. Sci. U.S.A.">
        <title>Sequence similarity analysis of Escherichia coli proteins: functional and evolutionary implications.</title>
        <authorList>
            <person name="Koonin E.V."/>
            <person name="Tatusov R.L."/>
            <person name="Rudd K.E."/>
        </authorList>
    </citation>
    <scope>POSSIBLE FUNCTION AS A PROTEASE</scope>
</reference>
<reference key="6">
    <citation type="journal article" date="2002" name="Genes Cells">
        <title>The Cpx stress response system of Escherichia coli senses plasma membrane proteins and controls HtpX, a membrane protease with a cytosolic active site.</title>
        <authorList>
            <person name="Shimohata N."/>
            <person name="Chiba S."/>
            <person name="Saikawa N."/>
            <person name="Ito K."/>
            <person name="Akiyama Y."/>
        </authorList>
    </citation>
    <scope>SUBCELLULAR LOCATION</scope>
    <scope>TOPOLOGY</scope>
    <scope>INDUCTION BY CPXR</scope>
    <scope>MUTAGENESIS OF ASN-105; PHE-107; HIS-139; GLU-140; GLU-222; ASP-226 AND HIS-276</scope>
</reference>
<reference key="7">
    <citation type="journal article" date="2005" name="J. Biol. Chem.">
        <title>Proteolytic activity of HtpX, a membrane-bound and stress-controlled protease from Escherichia coli.</title>
        <authorList>
            <person name="Sakoh M."/>
            <person name="Ito K."/>
            <person name="Akiyama Y."/>
        </authorList>
    </citation>
    <scope>FUNCTION</scope>
    <scope>CHARACTERIZATION AS A PROTEASE</scope>
    <scope>COFACTOR</scope>
    <scope>AUTOCATALYSIS</scope>
    <source>
        <strain>K12 / CSH26 / AD16</strain>
    </source>
</reference>
<reference key="8">
    <citation type="journal article" date="2005" name="Science">
        <title>Global topology analysis of the Escherichia coli inner membrane proteome.</title>
        <authorList>
            <person name="Daley D.O."/>
            <person name="Rapp M."/>
            <person name="Granseth E."/>
            <person name="Melen K."/>
            <person name="Drew D."/>
            <person name="von Heijne G."/>
        </authorList>
    </citation>
    <scope>TOPOLOGY [LARGE SCALE ANALYSIS]</scope>
    <source>
        <strain>K12 / MG1655 / ATCC 47076</strain>
    </source>
</reference>
<reference key="9">
    <citation type="journal article" date="2009" name="J. Biochem.">
        <title>Quality control of cytoplasmic membrane proteins in Escherichia coli.</title>
        <authorList>
            <person name="Akiyama Y."/>
        </authorList>
    </citation>
    <scope>REVIEW</scope>
</reference>
<comment type="function">
    <text evidence="4">Membrane-localized protease able to endoproteolytically degrade overproduced SecY but not YccA, another membrane protein. It seems to cleave SecY at specific cytoplasmic sites. Does not require ATP. Its natural substrate has not been identified. Probably plays a role in the quality control of integral membrane proteins.</text>
</comment>
<comment type="cofactor">
    <cofactor evidence="7">
        <name>Zn(2+)</name>
        <dbReference type="ChEBI" id="CHEBI:29105"/>
    </cofactor>
    <text evidence="7">Binds 1 zinc ion per subunit.</text>
</comment>
<comment type="subcellular location">
    <subcellularLocation>
        <location evidence="3">Cell inner membrane</location>
        <topology evidence="3">Multi-pass membrane protein</topology>
    </subcellularLocation>
    <text evidence="3">Bioinformatics programs predict 4 transmembrane helices, however PhoA and Bla fusions as well as other experiments only confirm the first 2.</text>
</comment>
<comment type="induction">
    <text evidence="3 5">By temperature upshift (by the sigma-32 heat shock transcription factor). Also under control of CpxR.</text>
</comment>
<comment type="PTM">
    <text>Undergoes self-cleavage. This may not be physiological.</text>
</comment>
<comment type="disruption phenotype">
    <text evidence="5">No visible phenotype, however one of HtpX or FtsH is essential for cell viability.</text>
</comment>
<comment type="similarity">
    <text evidence="6">Belongs to the peptidase M48B family.</text>
</comment>
<name>HTPX_ECOLI</name>
<sequence>MMRIALFLLTNLAVMVVFGLVLSLTGIQSSSVQGLMIMALLFGFGGSFVSLLMSKWMALRSVGGEVIEQPRNERERWLVNTVATQARQAGIAMPQVAIYHAPDINAFATGARRDASLVAVSTGLLQNMSPDEAEAVIAHEISHIANGDMVTMTLIQGVVNTFVIFISRILAQLAAGFMGGNRDEGEESNGNPLIYFAVATVLELVFGILASIITMWFSRHREFHADAGSAKLVGREKMIAALQRLKTSYEPQEATSMMALCINGKSKSLSELFMTHPPLDKRIEALRTGEYLK</sequence>